<evidence type="ECO:0000255" key="1">
    <source>
        <dbReference type="HAMAP-Rule" id="MF_00033"/>
    </source>
</evidence>
<feature type="chain" id="PRO_0000109223" description="UDP-N-acetylglucosamine--N-acetylmuramyl-(pentapeptide) pyrophosphoryl-undecaprenol N-acetylglucosamine transferase">
    <location>
        <begin position="1"/>
        <end position="352"/>
    </location>
</feature>
<feature type="binding site" evidence="1">
    <location>
        <position position="195"/>
    </location>
    <ligand>
        <name>UDP-N-acetyl-alpha-D-glucosamine</name>
        <dbReference type="ChEBI" id="CHEBI:57705"/>
    </ligand>
</feature>
<feature type="binding site" evidence="1">
    <location>
        <position position="287"/>
    </location>
    <ligand>
        <name>UDP-N-acetyl-alpha-D-glucosamine</name>
        <dbReference type="ChEBI" id="CHEBI:57705"/>
    </ligand>
</feature>
<dbReference type="EC" id="2.4.1.227" evidence="1"/>
<dbReference type="EMBL" id="AE005672">
    <property type="protein sequence ID" value="AAK74834.1"/>
    <property type="molecule type" value="Genomic_DNA"/>
</dbReference>
<dbReference type="PIR" id="A95080">
    <property type="entry name" value="A95080"/>
</dbReference>
<dbReference type="RefSeq" id="WP_000724790.1">
    <property type="nucleotide sequence ID" value="NZ_CP155539.1"/>
</dbReference>
<dbReference type="SMR" id="P0CB60"/>
<dbReference type="CAZy" id="GT28">
    <property type="family name" value="Glycosyltransferase Family 28"/>
</dbReference>
<dbReference type="PaxDb" id="170187-SP_0689"/>
<dbReference type="EnsemblBacteria" id="AAK74834">
    <property type="protein sequence ID" value="AAK74834"/>
    <property type="gene ID" value="SP_0689"/>
</dbReference>
<dbReference type="KEGG" id="spn:SP_0689"/>
<dbReference type="eggNOG" id="COG0707">
    <property type="taxonomic scope" value="Bacteria"/>
</dbReference>
<dbReference type="PhylomeDB" id="P0CB60"/>
<dbReference type="BioCyc" id="SPNE170187:G1FZB-710-MONOMER"/>
<dbReference type="UniPathway" id="UPA00219"/>
<dbReference type="Proteomes" id="UP000000585">
    <property type="component" value="Chromosome"/>
</dbReference>
<dbReference type="GO" id="GO:0005886">
    <property type="term" value="C:plasma membrane"/>
    <property type="evidence" value="ECO:0007669"/>
    <property type="project" value="UniProtKB-SubCell"/>
</dbReference>
<dbReference type="GO" id="GO:0050511">
    <property type="term" value="F:undecaprenyldiphospho-muramoylpentapeptide beta-N-acetylglucosaminyltransferase activity"/>
    <property type="evidence" value="ECO:0007669"/>
    <property type="project" value="UniProtKB-UniRule"/>
</dbReference>
<dbReference type="GO" id="GO:0005975">
    <property type="term" value="P:carbohydrate metabolic process"/>
    <property type="evidence" value="ECO:0007669"/>
    <property type="project" value="InterPro"/>
</dbReference>
<dbReference type="GO" id="GO:0051301">
    <property type="term" value="P:cell division"/>
    <property type="evidence" value="ECO:0007669"/>
    <property type="project" value="UniProtKB-KW"/>
</dbReference>
<dbReference type="GO" id="GO:0071555">
    <property type="term" value="P:cell wall organization"/>
    <property type="evidence" value="ECO:0007669"/>
    <property type="project" value="UniProtKB-KW"/>
</dbReference>
<dbReference type="GO" id="GO:0030259">
    <property type="term" value="P:lipid glycosylation"/>
    <property type="evidence" value="ECO:0007669"/>
    <property type="project" value="UniProtKB-UniRule"/>
</dbReference>
<dbReference type="GO" id="GO:0009252">
    <property type="term" value="P:peptidoglycan biosynthetic process"/>
    <property type="evidence" value="ECO:0007669"/>
    <property type="project" value="UniProtKB-UniRule"/>
</dbReference>
<dbReference type="GO" id="GO:0008360">
    <property type="term" value="P:regulation of cell shape"/>
    <property type="evidence" value="ECO:0007669"/>
    <property type="project" value="UniProtKB-KW"/>
</dbReference>
<dbReference type="CDD" id="cd03785">
    <property type="entry name" value="GT28_MurG"/>
    <property type="match status" value="1"/>
</dbReference>
<dbReference type="Gene3D" id="3.40.50.2000">
    <property type="entry name" value="Glycogen Phosphorylase B"/>
    <property type="match status" value="2"/>
</dbReference>
<dbReference type="HAMAP" id="MF_00033">
    <property type="entry name" value="MurG"/>
    <property type="match status" value="1"/>
</dbReference>
<dbReference type="InterPro" id="IPR006009">
    <property type="entry name" value="GlcNAc_MurG"/>
</dbReference>
<dbReference type="InterPro" id="IPR007235">
    <property type="entry name" value="Glyco_trans_28_C"/>
</dbReference>
<dbReference type="InterPro" id="IPR004276">
    <property type="entry name" value="GlycoTrans_28_N"/>
</dbReference>
<dbReference type="PANTHER" id="PTHR21015:SF27">
    <property type="entry name" value="UDP-N-ACETYLGLUCOSAMINE--N-ACETYLMURAMYL-(PENTAPEPTIDE) PYROPHOSPHORYL-UNDECAPRENOL N-ACETYLGLUCOSAMINE TRANSFERASE"/>
    <property type="match status" value="1"/>
</dbReference>
<dbReference type="PANTHER" id="PTHR21015">
    <property type="entry name" value="UDP-N-ACETYLGLUCOSAMINE--N-ACETYLMURAMYL-(PENTAPEPTIDE) PYROPHOSPHORYL-UNDECAPRENOL N-ACETYLGLUCOSAMINE TRANSFERASE 1"/>
    <property type="match status" value="1"/>
</dbReference>
<dbReference type="Pfam" id="PF04101">
    <property type="entry name" value="Glyco_tran_28_C"/>
    <property type="match status" value="1"/>
</dbReference>
<dbReference type="Pfam" id="PF03033">
    <property type="entry name" value="Glyco_transf_28"/>
    <property type="match status" value="1"/>
</dbReference>
<dbReference type="SUPFAM" id="SSF53756">
    <property type="entry name" value="UDP-Glycosyltransferase/glycogen phosphorylase"/>
    <property type="match status" value="1"/>
</dbReference>
<name>MURG_STRPN</name>
<organism>
    <name type="scientific">Streptococcus pneumoniae serotype 4 (strain ATCC BAA-334 / TIGR4)</name>
    <dbReference type="NCBI Taxonomy" id="170187"/>
    <lineage>
        <taxon>Bacteria</taxon>
        <taxon>Bacillati</taxon>
        <taxon>Bacillota</taxon>
        <taxon>Bacilli</taxon>
        <taxon>Lactobacillales</taxon>
        <taxon>Streptococcaceae</taxon>
        <taxon>Streptococcus</taxon>
    </lineage>
</organism>
<comment type="function">
    <text evidence="1">Cell wall formation. Catalyzes the transfer of a GlcNAc subunit on undecaprenyl-pyrophosphoryl-MurNAc-pentapeptide (lipid intermediate I) to form undecaprenyl-pyrophosphoryl-MurNAc-(pentapeptide)GlcNAc (lipid intermediate II).</text>
</comment>
<comment type="catalytic activity">
    <reaction evidence="1">
        <text>Mur2Ac(oyl-L-Ala-gamma-D-Glu-L-Lys-D-Ala-D-Ala)-di-trans,octa-cis-undecaprenyl diphosphate + UDP-N-acetyl-alpha-D-glucosamine = beta-D-GlcNAc-(1-&gt;4)-Mur2Ac(oyl-L-Ala-gamma-D-Glu-L-Lys-D-Ala-D-Ala)-di-trans,octa-cis-undecaprenyl diphosphate + UDP + H(+)</text>
        <dbReference type="Rhea" id="RHEA:23192"/>
        <dbReference type="ChEBI" id="CHEBI:15378"/>
        <dbReference type="ChEBI" id="CHEBI:57705"/>
        <dbReference type="ChEBI" id="CHEBI:58223"/>
        <dbReference type="ChEBI" id="CHEBI:60032"/>
        <dbReference type="ChEBI" id="CHEBI:60033"/>
        <dbReference type="EC" id="2.4.1.227"/>
    </reaction>
</comment>
<comment type="pathway">
    <text evidence="1">Cell wall biogenesis; peptidoglycan biosynthesis.</text>
</comment>
<comment type="subcellular location">
    <subcellularLocation>
        <location evidence="1">Cell membrane</location>
        <topology evidence="1">Peripheral membrane protein</topology>
        <orientation evidence="1">Cytoplasmic side</orientation>
    </subcellularLocation>
</comment>
<comment type="similarity">
    <text evidence="1">Belongs to the glycosyltransferase 28 family. MurG subfamily.</text>
</comment>
<keyword id="KW-0131">Cell cycle</keyword>
<keyword id="KW-0132">Cell division</keyword>
<keyword id="KW-1003">Cell membrane</keyword>
<keyword id="KW-0133">Cell shape</keyword>
<keyword id="KW-0961">Cell wall biogenesis/degradation</keyword>
<keyword id="KW-0328">Glycosyltransferase</keyword>
<keyword id="KW-0472">Membrane</keyword>
<keyword id="KW-0573">Peptidoglycan synthesis</keyword>
<keyword id="KW-1185">Reference proteome</keyword>
<keyword id="KW-0808">Transferase</keyword>
<sequence length="352" mass="39381">MKKIVFTGGGTVGHVTLNLLLMPKFIEDGWEVHYIGDKCGIEHQEILKSGLDVTFHSIATGKLRRYFSWQNMLDVFKVGWGIVQSLFIMLRLRPQTLFSKGGFVSVPPVIAARVSGVPVFIHESDLSMGLANKIAYKFATKMYSTFEQASSLAKVEHVGAVTKVSDKNTPEPDELVDIQTHFNPKLPTVLFVGGSAGARVFNQLVTDHKKELTERYNIINLTGDSSLNELRQNLFRVDYVTDLYQPLMELADIVVTRGGANTIFELLAIAKLHVIVPLGREASRGDQIENAAYFVKKGYAEDLQESDLTLDSLEEKLSHLLSHKEDYQAKMKASKELKSLADFYQLLKKDLS</sequence>
<gene>
    <name evidence="1" type="primary">murG</name>
    <name type="ordered locus">SP_0689</name>
</gene>
<reference key="1">
    <citation type="journal article" date="2001" name="Science">
        <title>Complete genome sequence of a virulent isolate of Streptococcus pneumoniae.</title>
        <authorList>
            <person name="Tettelin H."/>
            <person name="Nelson K.E."/>
            <person name="Paulsen I.T."/>
            <person name="Eisen J.A."/>
            <person name="Read T.D."/>
            <person name="Peterson S.N."/>
            <person name="Heidelberg J.F."/>
            <person name="DeBoy R.T."/>
            <person name="Haft D.H."/>
            <person name="Dodson R.J."/>
            <person name="Durkin A.S."/>
            <person name="Gwinn M.L."/>
            <person name="Kolonay J.F."/>
            <person name="Nelson W.C."/>
            <person name="Peterson J.D."/>
            <person name="Umayam L.A."/>
            <person name="White O."/>
            <person name="Salzberg S.L."/>
            <person name="Lewis M.R."/>
            <person name="Radune D."/>
            <person name="Holtzapple E.K."/>
            <person name="Khouri H.M."/>
            <person name="Wolf A.M."/>
            <person name="Utterback T.R."/>
            <person name="Hansen C.L."/>
            <person name="McDonald L.A."/>
            <person name="Feldblyum T.V."/>
            <person name="Angiuoli S.V."/>
            <person name="Dickinson T."/>
            <person name="Hickey E.K."/>
            <person name="Holt I.E."/>
            <person name="Loftus B.J."/>
            <person name="Yang F."/>
            <person name="Smith H.O."/>
            <person name="Venter J.C."/>
            <person name="Dougherty B.A."/>
            <person name="Morrison D.A."/>
            <person name="Hollingshead S.K."/>
            <person name="Fraser C.M."/>
        </authorList>
    </citation>
    <scope>NUCLEOTIDE SEQUENCE [LARGE SCALE GENOMIC DNA]</scope>
    <source>
        <strain>ATCC BAA-334 / TIGR4</strain>
    </source>
</reference>
<protein>
    <recommendedName>
        <fullName evidence="1">UDP-N-acetylglucosamine--N-acetylmuramyl-(pentapeptide) pyrophosphoryl-undecaprenol N-acetylglucosamine transferase</fullName>
        <ecNumber evidence="1">2.4.1.227</ecNumber>
    </recommendedName>
    <alternativeName>
        <fullName evidence="1">Undecaprenyl-PP-MurNAc-pentapeptide-UDPGlcNAc GlcNAc transferase</fullName>
    </alternativeName>
</protein>
<proteinExistence type="inferred from homology"/>
<accession>P0CB60</accession>
<accession>Q9ZHA9</accession>